<name>RSMG_BRAHW</name>
<feature type="chain" id="PRO_1000190216" description="Ribosomal RNA small subunit methyltransferase G">
    <location>
        <begin position="1"/>
        <end position="204"/>
    </location>
</feature>
<feature type="binding site" evidence="1">
    <location>
        <position position="74"/>
    </location>
    <ligand>
        <name>S-adenosyl-L-methionine</name>
        <dbReference type="ChEBI" id="CHEBI:59789"/>
    </ligand>
</feature>
<feature type="binding site" evidence="1">
    <location>
        <position position="79"/>
    </location>
    <ligand>
        <name>S-adenosyl-L-methionine</name>
        <dbReference type="ChEBI" id="CHEBI:59789"/>
    </ligand>
</feature>
<feature type="binding site" evidence="1">
    <location>
        <begin position="125"/>
        <end position="126"/>
    </location>
    <ligand>
        <name>S-adenosyl-L-methionine</name>
        <dbReference type="ChEBI" id="CHEBI:59789"/>
    </ligand>
</feature>
<feature type="binding site" evidence="1">
    <location>
        <position position="138"/>
    </location>
    <ligand>
        <name>S-adenosyl-L-methionine</name>
        <dbReference type="ChEBI" id="CHEBI:59789"/>
    </ligand>
</feature>
<protein>
    <recommendedName>
        <fullName evidence="1">Ribosomal RNA small subunit methyltransferase G</fullName>
        <ecNumber evidence="1">2.1.1.-</ecNumber>
    </recommendedName>
    <alternativeName>
        <fullName evidence="1">16S rRNA 7-methylguanosine methyltransferase</fullName>
        <shortName evidence="1">16S rRNA m7G methyltransferase</shortName>
    </alternativeName>
</protein>
<sequence>MNYDSILDNISNIIKIDENKKEKLIQYASLVIDYNKNVNITGAKTEEDFFNDHIADCLLALDIFYDYDNIIDIGSGSGLPSIPLAIIFNDKKFTLCESKNKKAEFLRLAKDKLGLDNIEVKCINAYEIKEKYDTITSRAFSDISTLLKIFNKLKTKKSKLILYKGKIEKIEEELKEANIQKNKYNIEIKKLESKDKERHIVIIS</sequence>
<proteinExistence type="inferred from homology"/>
<accession>C0R0Y0</accession>
<gene>
    <name evidence="1" type="primary">rsmG</name>
    <name type="ordered locus">BHWA1_01289</name>
</gene>
<dbReference type="EC" id="2.1.1.-" evidence="1"/>
<dbReference type="EMBL" id="CP001357">
    <property type="protein sequence ID" value="ACN83768.1"/>
    <property type="molecule type" value="Genomic_DNA"/>
</dbReference>
<dbReference type="RefSeq" id="WP_012670814.1">
    <property type="nucleotide sequence ID" value="NC_012225.1"/>
</dbReference>
<dbReference type="SMR" id="C0R0Y0"/>
<dbReference type="STRING" id="565034.BHWA1_01289"/>
<dbReference type="KEGG" id="bhy:BHWA1_01289"/>
<dbReference type="eggNOG" id="COG0357">
    <property type="taxonomic scope" value="Bacteria"/>
</dbReference>
<dbReference type="HOGENOM" id="CLU_065341_2_1_12"/>
<dbReference type="Proteomes" id="UP000001803">
    <property type="component" value="Chromosome"/>
</dbReference>
<dbReference type="GO" id="GO:0005829">
    <property type="term" value="C:cytosol"/>
    <property type="evidence" value="ECO:0007669"/>
    <property type="project" value="TreeGrafter"/>
</dbReference>
<dbReference type="GO" id="GO:0070043">
    <property type="term" value="F:rRNA (guanine-N7-)-methyltransferase activity"/>
    <property type="evidence" value="ECO:0007669"/>
    <property type="project" value="UniProtKB-UniRule"/>
</dbReference>
<dbReference type="CDD" id="cd02440">
    <property type="entry name" value="AdoMet_MTases"/>
    <property type="match status" value="1"/>
</dbReference>
<dbReference type="Gene3D" id="3.40.50.150">
    <property type="entry name" value="Vaccinia Virus protein VP39"/>
    <property type="match status" value="1"/>
</dbReference>
<dbReference type="HAMAP" id="MF_00074">
    <property type="entry name" value="16SrRNA_methyltr_G"/>
    <property type="match status" value="1"/>
</dbReference>
<dbReference type="InterPro" id="IPR003682">
    <property type="entry name" value="rRNA_ssu_MeTfrase_G"/>
</dbReference>
<dbReference type="InterPro" id="IPR029063">
    <property type="entry name" value="SAM-dependent_MTases_sf"/>
</dbReference>
<dbReference type="NCBIfam" id="TIGR00138">
    <property type="entry name" value="rsmG_gidB"/>
    <property type="match status" value="1"/>
</dbReference>
<dbReference type="PANTHER" id="PTHR31760">
    <property type="entry name" value="S-ADENOSYL-L-METHIONINE-DEPENDENT METHYLTRANSFERASES SUPERFAMILY PROTEIN"/>
    <property type="match status" value="1"/>
</dbReference>
<dbReference type="PANTHER" id="PTHR31760:SF0">
    <property type="entry name" value="S-ADENOSYL-L-METHIONINE-DEPENDENT METHYLTRANSFERASES SUPERFAMILY PROTEIN"/>
    <property type="match status" value="1"/>
</dbReference>
<dbReference type="Pfam" id="PF02527">
    <property type="entry name" value="GidB"/>
    <property type="match status" value="1"/>
</dbReference>
<dbReference type="PIRSF" id="PIRSF003078">
    <property type="entry name" value="GidB"/>
    <property type="match status" value="1"/>
</dbReference>
<dbReference type="SUPFAM" id="SSF53335">
    <property type="entry name" value="S-adenosyl-L-methionine-dependent methyltransferases"/>
    <property type="match status" value="1"/>
</dbReference>
<organism>
    <name type="scientific">Brachyspira hyodysenteriae (strain ATCC 49526 / WA1)</name>
    <dbReference type="NCBI Taxonomy" id="565034"/>
    <lineage>
        <taxon>Bacteria</taxon>
        <taxon>Pseudomonadati</taxon>
        <taxon>Spirochaetota</taxon>
        <taxon>Spirochaetia</taxon>
        <taxon>Brachyspirales</taxon>
        <taxon>Brachyspiraceae</taxon>
        <taxon>Brachyspira</taxon>
    </lineage>
</organism>
<reference key="1">
    <citation type="journal article" date="2009" name="PLoS ONE">
        <title>Genome sequence of the pathogenic intestinal spirochete Brachyspira hyodysenteriae reveals adaptations to its lifestyle in the porcine large intestine.</title>
        <authorList>
            <person name="Bellgard M.I."/>
            <person name="Wanchanthuek P."/>
            <person name="La T."/>
            <person name="Ryan K."/>
            <person name="Moolhuijzen P."/>
            <person name="Albertyn Z."/>
            <person name="Shaban B."/>
            <person name="Motro Y."/>
            <person name="Dunn D.S."/>
            <person name="Schibeci D."/>
            <person name="Hunter A."/>
            <person name="Barrero R."/>
            <person name="Phillips N.D."/>
            <person name="Hampson D.J."/>
        </authorList>
    </citation>
    <scope>NUCLEOTIDE SEQUENCE [LARGE SCALE GENOMIC DNA]</scope>
    <source>
        <strain>ATCC 49526 / WA1</strain>
    </source>
</reference>
<evidence type="ECO:0000255" key="1">
    <source>
        <dbReference type="HAMAP-Rule" id="MF_00074"/>
    </source>
</evidence>
<keyword id="KW-0963">Cytoplasm</keyword>
<keyword id="KW-0489">Methyltransferase</keyword>
<keyword id="KW-0698">rRNA processing</keyword>
<keyword id="KW-0949">S-adenosyl-L-methionine</keyword>
<keyword id="KW-0808">Transferase</keyword>
<comment type="function">
    <text evidence="1">Specifically methylates the N7 position of a guanine in 16S rRNA.</text>
</comment>
<comment type="subcellular location">
    <subcellularLocation>
        <location evidence="1">Cytoplasm</location>
    </subcellularLocation>
</comment>
<comment type="similarity">
    <text evidence="1">Belongs to the methyltransferase superfamily. RNA methyltransferase RsmG family.</text>
</comment>